<protein>
    <recommendedName>
        <fullName evidence="1">Large ribosomal subunit protein bL34</fullName>
    </recommendedName>
    <alternativeName>
        <fullName evidence="2">50S ribosomal protein L34</fullName>
    </alternativeName>
</protein>
<proteinExistence type="inferred from homology"/>
<name>RL34_POLNS</name>
<gene>
    <name evidence="1" type="primary">rpmH</name>
    <name type="ordered locus">Pnec_1787</name>
</gene>
<organism>
    <name type="scientific">Polynucleobacter necessarius subsp. necessarius (strain STIR1)</name>
    <dbReference type="NCBI Taxonomy" id="452638"/>
    <lineage>
        <taxon>Bacteria</taxon>
        <taxon>Pseudomonadati</taxon>
        <taxon>Pseudomonadota</taxon>
        <taxon>Betaproteobacteria</taxon>
        <taxon>Burkholderiales</taxon>
        <taxon>Burkholderiaceae</taxon>
        <taxon>Polynucleobacter</taxon>
    </lineage>
</organism>
<feature type="chain" id="PRO_1000196086" description="Large ribosomal subunit protein bL34">
    <location>
        <begin position="1"/>
        <end position="44"/>
    </location>
</feature>
<accession>B1XSP0</accession>
<dbReference type="EMBL" id="CP001010">
    <property type="protein sequence ID" value="ACB44839.1"/>
    <property type="molecule type" value="Genomic_DNA"/>
</dbReference>
<dbReference type="SMR" id="B1XSP0"/>
<dbReference type="STRING" id="452638.Pnec_1787"/>
<dbReference type="KEGG" id="pne:Pnec_1787"/>
<dbReference type="eggNOG" id="COG0230">
    <property type="taxonomic scope" value="Bacteria"/>
</dbReference>
<dbReference type="HOGENOM" id="CLU_129938_2_0_4"/>
<dbReference type="OrthoDB" id="9804164at2"/>
<dbReference type="GO" id="GO:1990904">
    <property type="term" value="C:ribonucleoprotein complex"/>
    <property type="evidence" value="ECO:0007669"/>
    <property type="project" value="UniProtKB-KW"/>
</dbReference>
<dbReference type="GO" id="GO:0005840">
    <property type="term" value="C:ribosome"/>
    <property type="evidence" value="ECO:0007669"/>
    <property type="project" value="UniProtKB-KW"/>
</dbReference>
<dbReference type="GO" id="GO:0003735">
    <property type="term" value="F:structural constituent of ribosome"/>
    <property type="evidence" value="ECO:0007669"/>
    <property type="project" value="InterPro"/>
</dbReference>
<dbReference type="GO" id="GO:0006412">
    <property type="term" value="P:translation"/>
    <property type="evidence" value="ECO:0007669"/>
    <property type="project" value="UniProtKB-UniRule"/>
</dbReference>
<dbReference type="FunFam" id="1.10.287.3980:FF:000001">
    <property type="entry name" value="Mitochondrial ribosomal protein L34"/>
    <property type="match status" value="1"/>
</dbReference>
<dbReference type="Gene3D" id="1.10.287.3980">
    <property type="match status" value="1"/>
</dbReference>
<dbReference type="HAMAP" id="MF_00391">
    <property type="entry name" value="Ribosomal_bL34"/>
    <property type="match status" value="1"/>
</dbReference>
<dbReference type="InterPro" id="IPR000271">
    <property type="entry name" value="Ribosomal_bL34"/>
</dbReference>
<dbReference type="InterPro" id="IPR020939">
    <property type="entry name" value="Ribosomal_bL34_CS"/>
</dbReference>
<dbReference type="NCBIfam" id="TIGR01030">
    <property type="entry name" value="rpmH_bact"/>
    <property type="match status" value="1"/>
</dbReference>
<dbReference type="PANTHER" id="PTHR14503:SF4">
    <property type="entry name" value="LARGE RIBOSOMAL SUBUNIT PROTEIN BL34M"/>
    <property type="match status" value="1"/>
</dbReference>
<dbReference type="PANTHER" id="PTHR14503">
    <property type="entry name" value="MITOCHONDRIAL RIBOSOMAL PROTEIN 34 FAMILY MEMBER"/>
    <property type="match status" value="1"/>
</dbReference>
<dbReference type="Pfam" id="PF00468">
    <property type="entry name" value="Ribosomal_L34"/>
    <property type="match status" value="1"/>
</dbReference>
<dbReference type="PROSITE" id="PS00784">
    <property type="entry name" value="RIBOSOMAL_L34"/>
    <property type="match status" value="1"/>
</dbReference>
<evidence type="ECO:0000255" key="1">
    <source>
        <dbReference type="HAMAP-Rule" id="MF_00391"/>
    </source>
</evidence>
<evidence type="ECO:0000305" key="2"/>
<keyword id="KW-0687">Ribonucleoprotein</keyword>
<keyword id="KW-0689">Ribosomal protein</keyword>
<reference key="1">
    <citation type="journal article" date="2013" name="Proc. Natl. Acad. Sci. U.S.A.">
        <title>Polynucleobacter necessarius, a model for genome reduction in both free-living and symbiotic bacteria.</title>
        <authorList>
            <person name="Boscaro V."/>
            <person name="Felletti M."/>
            <person name="Vannini C."/>
            <person name="Ackerman M.S."/>
            <person name="Chain P.S."/>
            <person name="Malfatti S."/>
            <person name="Vergez L.M."/>
            <person name="Shin M."/>
            <person name="Doak T.G."/>
            <person name="Lynch M."/>
            <person name="Petroni G."/>
        </authorList>
    </citation>
    <scope>NUCLEOTIDE SEQUENCE [LARGE SCALE GENOMIC DNA]</scope>
    <source>
        <strain>STIR1</strain>
    </source>
</reference>
<sequence>MKRTYQPSVTRRKRTHGFRIRMKTKSGRAVLNARRAKGRKRLAV</sequence>
<comment type="similarity">
    <text evidence="1">Belongs to the bacterial ribosomal protein bL34 family.</text>
</comment>